<reference key="1">
    <citation type="journal article" date="2011" name="J. Bacteriol.">
        <title>Comparative genomics of 28 Salmonella enterica isolates: evidence for CRISPR-mediated adaptive sublineage evolution.</title>
        <authorList>
            <person name="Fricke W.F."/>
            <person name="Mammel M.K."/>
            <person name="McDermott P.F."/>
            <person name="Tartera C."/>
            <person name="White D.G."/>
            <person name="Leclerc J.E."/>
            <person name="Ravel J."/>
            <person name="Cebula T.A."/>
        </authorList>
    </citation>
    <scope>NUCLEOTIDE SEQUENCE [LARGE SCALE GENOMIC DNA]</scope>
    <source>
        <strain>SL254</strain>
    </source>
</reference>
<dbReference type="EC" id="7.1.1.-" evidence="1"/>
<dbReference type="EMBL" id="CP001113">
    <property type="protein sequence ID" value="ACF61670.1"/>
    <property type="molecule type" value="Genomic_DNA"/>
</dbReference>
<dbReference type="RefSeq" id="WP_000156669.1">
    <property type="nucleotide sequence ID" value="NZ_CCMR01000001.1"/>
</dbReference>
<dbReference type="SMR" id="B4SYY7"/>
<dbReference type="KEGG" id="see:SNSL254_A2500"/>
<dbReference type="HOGENOM" id="CLU_007100_1_5_6"/>
<dbReference type="Proteomes" id="UP000008824">
    <property type="component" value="Chromosome"/>
</dbReference>
<dbReference type="GO" id="GO:0005886">
    <property type="term" value="C:plasma membrane"/>
    <property type="evidence" value="ECO:0007669"/>
    <property type="project" value="UniProtKB-SubCell"/>
</dbReference>
<dbReference type="GO" id="GO:0008137">
    <property type="term" value="F:NADH dehydrogenase (ubiquinone) activity"/>
    <property type="evidence" value="ECO:0007669"/>
    <property type="project" value="InterPro"/>
</dbReference>
<dbReference type="GO" id="GO:0050136">
    <property type="term" value="F:NADH:ubiquinone reductase (non-electrogenic) activity"/>
    <property type="evidence" value="ECO:0007669"/>
    <property type="project" value="UniProtKB-UniRule"/>
</dbReference>
<dbReference type="GO" id="GO:0048038">
    <property type="term" value="F:quinone binding"/>
    <property type="evidence" value="ECO:0007669"/>
    <property type="project" value="UniProtKB-KW"/>
</dbReference>
<dbReference type="GO" id="GO:0042773">
    <property type="term" value="P:ATP synthesis coupled electron transport"/>
    <property type="evidence" value="ECO:0007669"/>
    <property type="project" value="InterPro"/>
</dbReference>
<dbReference type="HAMAP" id="MF_00445">
    <property type="entry name" value="NDH1_NuoN_1"/>
    <property type="match status" value="1"/>
</dbReference>
<dbReference type="InterPro" id="IPR010096">
    <property type="entry name" value="NADH-Q_OxRdtase_suN/2"/>
</dbReference>
<dbReference type="InterPro" id="IPR001750">
    <property type="entry name" value="ND/Mrp_TM"/>
</dbReference>
<dbReference type="NCBIfam" id="TIGR01770">
    <property type="entry name" value="NDH_I_N"/>
    <property type="match status" value="1"/>
</dbReference>
<dbReference type="NCBIfam" id="NF004439">
    <property type="entry name" value="PRK05777.1-1"/>
    <property type="match status" value="1"/>
</dbReference>
<dbReference type="PANTHER" id="PTHR22773">
    <property type="entry name" value="NADH DEHYDROGENASE"/>
    <property type="match status" value="1"/>
</dbReference>
<dbReference type="Pfam" id="PF00361">
    <property type="entry name" value="Proton_antipo_M"/>
    <property type="match status" value="1"/>
</dbReference>
<name>NUON_SALNS</name>
<gene>
    <name evidence="1" type="primary">nuoN</name>
    <name type="ordered locus">SNSL254_A2500</name>
</gene>
<evidence type="ECO:0000255" key="1">
    <source>
        <dbReference type="HAMAP-Rule" id="MF_00445"/>
    </source>
</evidence>
<proteinExistence type="inferred from homology"/>
<organism>
    <name type="scientific">Salmonella newport (strain SL254)</name>
    <dbReference type="NCBI Taxonomy" id="423368"/>
    <lineage>
        <taxon>Bacteria</taxon>
        <taxon>Pseudomonadati</taxon>
        <taxon>Pseudomonadota</taxon>
        <taxon>Gammaproteobacteria</taxon>
        <taxon>Enterobacterales</taxon>
        <taxon>Enterobacteriaceae</taxon>
        <taxon>Salmonella</taxon>
    </lineage>
</organism>
<sequence length="485" mass="51983">MTITPQHLIALLPLLIVGLTVVVVMLSIAWRRNHFLNATLSVIGLNAALVSLWFVGQAGAMDVTPLMRVDGFAMLYTGLVLLASLATCTFAYPWLEGYNDNQEEFYLLVLIASLGGILLANANHLAALFLGIELISLPLFGLIGYAFRQKRSLEASIKYTILSAAASSFLLFGMALVYAQSGNLSFEALGKSLGDGMLHEPLLLAGFGLMIVGLGFKLSLVPFHLWTPDVYQGAPAPVSTFLATASKIAIFGVVMRLFLYAPVGDSEAVRVVLGIIAFASIIFGNLMALSQTNIKRLLGYSSISHLGYLLVALIALQSGEMSMEAVGVYLAGYLFSSLGAFGVVSLMSSPFRGPDADSLYSYRGLFWHRPVLAAVMTVMMLSLAGIPMTLGFIGKFYVLAVGVQASLWWLVAAVVVGSAIGLYYYLRVAVSLYLHAPQQPGRDAPTNWQYSAGGIVVLISALLVLVLGVWPQPLISLVQLATPLM</sequence>
<protein>
    <recommendedName>
        <fullName evidence="1">NADH-quinone oxidoreductase subunit N</fullName>
        <ecNumber evidence="1">7.1.1.-</ecNumber>
    </recommendedName>
    <alternativeName>
        <fullName evidence="1">NADH dehydrogenase I subunit N</fullName>
    </alternativeName>
    <alternativeName>
        <fullName evidence="1">NDH-1 subunit N</fullName>
    </alternativeName>
</protein>
<accession>B4SYY7</accession>
<comment type="function">
    <text evidence="1">NDH-1 shuttles electrons from NADH, via FMN and iron-sulfur (Fe-S) centers, to quinones in the respiratory chain. The immediate electron acceptor for the enzyme in this species is believed to be ubiquinone. Couples the redox reaction to proton translocation (for every two electrons transferred, four hydrogen ions are translocated across the cytoplasmic membrane), and thus conserves the redox energy in a proton gradient.</text>
</comment>
<comment type="catalytic activity">
    <reaction evidence="1">
        <text>a quinone + NADH + 5 H(+)(in) = a quinol + NAD(+) + 4 H(+)(out)</text>
        <dbReference type="Rhea" id="RHEA:57888"/>
        <dbReference type="ChEBI" id="CHEBI:15378"/>
        <dbReference type="ChEBI" id="CHEBI:24646"/>
        <dbReference type="ChEBI" id="CHEBI:57540"/>
        <dbReference type="ChEBI" id="CHEBI:57945"/>
        <dbReference type="ChEBI" id="CHEBI:132124"/>
    </reaction>
</comment>
<comment type="subunit">
    <text evidence="1">NDH-1 is composed of 13 different subunits. Subunits NuoA, H, J, K, L, M, N constitute the membrane sector of the complex.</text>
</comment>
<comment type="subcellular location">
    <subcellularLocation>
        <location evidence="1">Cell inner membrane</location>
        <topology evidence="1">Multi-pass membrane protein</topology>
    </subcellularLocation>
</comment>
<comment type="similarity">
    <text evidence="1">Belongs to the complex I subunit 2 family.</text>
</comment>
<feature type="chain" id="PRO_1000145878" description="NADH-quinone oxidoreductase subunit N">
    <location>
        <begin position="1"/>
        <end position="485"/>
    </location>
</feature>
<feature type="transmembrane region" description="Helical" evidence="1">
    <location>
        <begin position="8"/>
        <end position="28"/>
    </location>
</feature>
<feature type="transmembrane region" description="Helical" evidence="1">
    <location>
        <begin position="35"/>
        <end position="55"/>
    </location>
</feature>
<feature type="transmembrane region" description="Helical" evidence="1">
    <location>
        <begin position="71"/>
        <end position="91"/>
    </location>
</feature>
<feature type="transmembrane region" description="Helical" evidence="1">
    <location>
        <begin position="105"/>
        <end position="125"/>
    </location>
</feature>
<feature type="transmembrane region" description="Helical" evidence="1">
    <location>
        <begin position="127"/>
        <end position="147"/>
    </location>
</feature>
<feature type="transmembrane region" description="Helical" evidence="1">
    <location>
        <begin position="159"/>
        <end position="179"/>
    </location>
</feature>
<feature type="transmembrane region" description="Helical" evidence="1">
    <location>
        <begin position="203"/>
        <end position="223"/>
    </location>
</feature>
<feature type="transmembrane region" description="Helical" evidence="1">
    <location>
        <begin position="235"/>
        <end position="255"/>
    </location>
</feature>
<feature type="transmembrane region" description="Helical" evidence="1">
    <location>
        <begin position="271"/>
        <end position="291"/>
    </location>
</feature>
<feature type="transmembrane region" description="Helical" evidence="1">
    <location>
        <begin position="297"/>
        <end position="317"/>
    </location>
</feature>
<feature type="transmembrane region" description="Helical" evidence="1">
    <location>
        <begin position="326"/>
        <end position="346"/>
    </location>
</feature>
<feature type="transmembrane region" description="Helical" evidence="1">
    <location>
        <begin position="373"/>
        <end position="393"/>
    </location>
</feature>
<feature type="transmembrane region" description="Helical" evidence="1">
    <location>
        <begin position="408"/>
        <end position="430"/>
    </location>
</feature>
<feature type="transmembrane region" description="Helical" evidence="1">
    <location>
        <begin position="455"/>
        <end position="475"/>
    </location>
</feature>
<keyword id="KW-0997">Cell inner membrane</keyword>
<keyword id="KW-1003">Cell membrane</keyword>
<keyword id="KW-0472">Membrane</keyword>
<keyword id="KW-0520">NAD</keyword>
<keyword id="KW-0874">Quinone</keyword>
<keyword id="KW-1278">Translocase</keyword>
<keyword id="KW-0812">Transmembrane</keyword>
<keyword id="KW-1133">Transmembrane helix</keyword>
<keyword id="KW-0813">Transport</keyword>
<keyword id="KW-0830">Ubiquinone</keyword>